<sequence>MSTESMIRDLELAEEALKRKARGPLGLGRCLCLTLISSFLLAGATVLFCLLHFGVIGPQKEQESTDTFLDMKPLTQRVRSLQNESAKPVAHLIADQLAEGQLLWVGDVANTLLMNGMELVDNQLVLPSTGLYLVYSQLLYKGSQCGKESLVLTHKISRFTLSYQKKVTLLANIRSSCRKAAEDDGEPSAWYEPVYLAGVFQLTEGDKLVVDTNYPENLDFAEPGQLYFGAIAL</sequence>
<reference key="1">
    <citation type="journal article" date="1996" name="Immunol. Cell Biol.">
        <title>Molecular cloning and characterization of tumor necrosis factor alpha (TNF-alpha) from the Australian common brushtail possum, Trichosurus vulpecula.</title>
        <authorList>
            <person name="Wedlock D.N."/>
            <person name="Aldwell F.E."/>
            <person name="Buddle B.M."/>
        </authorList>
    </citation>
    <scope>NUCLEOTIDE SEQUENCE [MRNA]</scope>
</reference>
<comment type="function">
    <text evidence="2 3">Cytokine that binds to TNFRSF1A/TNFR1 and TNFRSF1B/TNFBR. It is mainly secreted by macrophages and can induce cell death of certain tumor cell lines. It is potent pyrogen causing fever by direct action or by stimulation of interleukin-1 secretion and is implicated in the induction of cachexia, Under certain conditions it can stimulate cell proliferation and induce cell differentiation (By similarity). Induces insulin resistance in adipocytes via inhibition of insulin-induced IRS1 tyrosine phosphorylation and insulin-induced glucose uptake. Induces GKAP42 protein degradation in adipocytes which is partially responsible for TNF-induced insulin resistance (By similarity). Plays a role in angiogenesis by inducing VEGF production synergistically with IL1B and IL6 (By similarity). Promotes osteoclastogenesis and therefore mediates bone resorption (By similarity).</text>
</comment>
<comment type="function">
    <text evidence="2">The TNF intracellular domain (ICD) form induces IL12 production in dendritic cells.</text>
</comment>
<comment type="subunit">
    <text evidence="1">Homotrimer. Interacts with SPPL2B (By similarity).</text>
</comment>
<comment type="subcellular location">
    <subcellularLocation>
        <location evidence="1">Cell membrane</location>
        <topology evidence="1">Single-pass type II membrane protein</topology>
    </subcellularLocation>
</comment>
<comment type="subcellular location">
    <molecule>Tumor necrosis factor, membrane form</molecule>
    <subcellularLocation>
        <location evidence="1">Membrane</location>
        <topology evidence="1">Single-pass type II membrane protein</topology>
    </subcellularLocation>
</comment>
<comment type="subcellular location">
    <molecule>Tumor necrosis factor, soluble form</molecule>
    <subcellularLocation>
        <location evidence="1">Secreted</location>
    </subcellularLocation>
</comment>
<comment type="subcellular location">
    <molecule>C-domain 1</molecule>
    <subcellularLocation>
        <location evidence="1">Secreted</location>
    </subcellularLocation>
</comment>
<comment type="subcellular location">
    <molecule>C-domain 2</molecule>
    <subcellularLocation>
        <location evidence="1">Secreted</location>
    </subcellularLocation>
</comment>
<comment type="PTM">
    <text evidence="1">The soluble form derives from the membrane form by proteolytic processing. The membrane-bound form is further proteolytically processed by SPPL2A or SPPL2B through regulated intramembrane proteolysis producing TNF intracellular domains (ICD1 and ICD2) released in the cytosol and TNF C-domain 1 and C-domain 2 secreted into the extracellular space (By similarity).</text>
</comment>
<comment type="PTM">
    <text evidence="1">The membrane form, but not the soluble form, is phosphorylated on serine residues. Dephosphorylation of the membrane form occurs by binding to soluble TNFRSF1A/TNFR1 (By similarity).</text>
</comment>
<comment type="PTM">
    <text evidence="1">O-glycosylated; glycans contain galactose, N-acetylgalactosamine and N-acetylneuraminic acid.</text>
</comment>
<comment type="PTM">
    <molecule>Tumor necrosis factor, soluble form</molecule>
    <text evidence="2">The soluble form is demyristoylated by SIRT6, promoting its secretion.</text>
</comment>
<comment type="similarity">
    <text evidence="6">Belongs to the tumor necrosis factor family.</text>
</comment>
<proteinExistence type="evidence at transcript level"/>
<name>TNFA_TRIVU</name>
<evidence type="ECO:0000250" key="1"/>
<evidence type="ECO:0000250" key="2">
    <source>
        <dbReference type="UniProtKB" id="P01375"/>
    </source>
</evidence>
<evidence type="ECO:0000250" key="3">
    <source>
        <dbReference type="UniProtKB" id="P06804"/>
    </source>
</evidence>
<evidence type="ECO:0000255" key="4"/>
<evidence type="ECO:0000255" key="5">
    <source>
        <dbReference type="PROSITE-ProRule" id="PRU01387"/>
    </source>
</evidence>
<evidence type="ECO:0000305" key="6"/>
<keyword id="KW-1003">Cell membrane</keyword>
<keyword id="KW-0202">Cytokine</keyword>
<keyword id="KW-1015">Disulfide bond</keyword>
<keyword id="KW-0449">Lipoprotein</keyword>
<keyword id="KW-0472">Membrane</keyword>
<keyword id="KW-0519">Myristate</keyword>
<keyword id="KW-0597">Phosphoprotein</keyword>
<keyword id="KW-0964">Secreted</keyword>
<keyword id="KW-0735">Signal-anchor</keyword>
<keyword id="KW-0812">Transmembrane</keyword>
<keyword id="KW-1133">Transmembrane helix</keyword>
<organism>
    <name type="scientific">Trichosurus vulpecula</name>
    <name type="common">Brush-tailed possum</name>
    <dbReference type="NCBI Taxonomy" id="9337"/>
    <lineage>
        <taxon>Eukaryota</taxon>
        <taxon>Metazoa</taxon>
        <taxon>Chordata</taxon>
        <taxon>Craniata</taxon>
        <taxon>Vertebrata</taxon>
        <taxon>Euteleostomi</taxon>
        <taxon>Mammalia</taxon>
        <taxon>Metatheria</taxon>
        <taxon>Diprotodontia</taxon>
        <taxon>Phalangeridae</taxon>
        <taxon>Trichosurus</taxon>
    </lineage>
</organism>
<protein>
    <recommendedName>
        <fullName>Tumor necrosis factor</fullName>
    </recommendedName>
    <alternativeName>
        <fullName>Cachectin</fullName>
    </alternativeName>
    <alternativeName>
        <fullName>TNF-alpha</fullName>
    </alternativeName>
    <alternativeName>
        <fullName>Tumor necrosis factor ligand superfamily member 2</fullName>
        <shortName>TNF-a</shortName>
    </alternativeName>
    <component>
        <recommendedName>
            <fullName>Tumor necrosis factor, membrane form</fullName>
        </recommendedName>
        <alternativeName>
            <fullName>N-terminal fragment</fullName>
            <shortName>NTF</shortName>
        </alternativeName>
    </component>
    <component>
        <recommendedName>
            <fullName>Intracellular domain 1</fullName>
            <shortName>ICD1</shortName>
        </recommendedName>
    </component>
    <component>
        <recommendedName>
            <fullName>Intracellular domain 2</fullName>
            <shortName>ICD2</shortName>
        </recommendedName>
    </component>
    <component>
        <recommendedName>
            <fullName>C-domain 1</fullName>
        </recommendedName>
    </component>
    <component>
        <recommendedName>
            <fullName>C-domain 2</fullName>
        </recommendedName>
    </component>
    <component>
        <recommendedName>
            <fullName>Tumor necrosis factor, soluble form</fullName>
        </recommendedName>
    </component>
</protein>
<feature type="chain" id="PRO_0000034457" description="Tumor necrosis factor, membrane form">
    <location>
        <begin position="1"/>
        <end position="233"/>
    </location>
</feature>
<feature type="chain" id="PRO_0000417299" description="Intracellular domain 1" evidence="1">
    <location>
        <begin position="1"/>
        <end position="39"/>
    </location>
</feature>
<feature type="chain" id="PRO_0000417300" description="Intracellular domain 2" evidence="1">
    <location>
        <begin position="1"/>
        <end position="35"/>
    </location>
</feature>
<feature type="chain" id="PRO_0000417301" description="C-domain 1" evidence="1">
    <location>
        <begin position="50"/>
        <end status="unknown"/>
    </location>
</feature>
<feature type="chain" id="PRO_0000417302" description="C-domain 2" evidence="1">
    <location>
        <begin position="52"/>
        <end status="unknown"/>
    </location>
</feature>
<feature type="chain" id="PRO_0000034458" description="Tumor necrosis factor, soluble form">
    <location>
        <begin position="78" status="uncertain"/>
        <end position="233"/>
    </location>
</feature>
<feature type="topological domain" description="Cytoplasmic" evidence="4">
    <location>
        <begin position="1"/>
        <end position="35"/>
    </location>
</feature>
<feature type="transmembrane region" description="Helical; Signal-anchor for type II membrane protein" evidence="4">
    <location>
        <begin position="36"/>
        <end position="56"/>
    </location>
</feature>
<feature type="topological domain" description="Extracellular" evidence="4">
    <location>
        <begin position="57"/>
        <end position="233"/>
    </location>
</feature>
<feature type="domain" description="THD" evidence="5">
    <location>
        <begin position="88"/>
        <end position="233"/>
    </location>
</feature>
<feature type="site" description="Cleavage; by SPPL2A or SPPL2B" evidence="1">
    <location>
        <begin position="34"/>
        <end position="35"/>
    </location>
</feature>
<feature type="site" description="Cleavage; by SPPL2A or SPPL2B" evidence="1">
    <location>
        <begin position="49"/>
        <end position="50"/>
    </location>
</feature>
<feature type="site" description="Cleavage; by SPPL2A or SPPL2B" evidence="1">
    <location>
        <begin position="51"/>
        <end position="52"/>
    </location>
</feature>
<feature type="site" description="Cleavage; by ADAM17" evidence="4">
    <location>
        <begin position="77"/>
        <end position="78"/>
    </location>
</feature>
<feature type="modified residue" description="Phosphoserine; by CK1" evidence="1">
    <location>
        <position position="2"/>
    </location>
</feature>
<feature type="lipid moiety-binding region" description="N6-myristoyl lysine" evidence="2">
    <location>
        <position position="20"/>
    </location>
</feature>
<feature type="disulfide bond" evidence="5">
    <location>
        <begin position="145"/>
        <end position="177"/>
    </location>
</feature>
<gene>
    <name type="primary">TNF</name>
    <name type="synonym">TNFA</name>
    <name type="synonym">TNFSF2</name>
</gene>
<accession>P79374</accession>
<dbReference type="EMBL" id="S83283">
    <property type="protein sequence ID" value="AAB49506.1"/>
    <property type="molecule type" value="mRNA"/>
</dbReference>
<dbReference type="EMBL" id="AF016102">
    <property type="protein sequence ID" value="AAC48766.1"/>
    <property type="molecule type" value="mRNA"/>
</dbReference>
<dbReference type="RefSeq" id="XP_036624352.1">
    <property type="nucleotide sequence ID" value="XM_036768457.1"/>
</dbReference>
<dbReference type="SMR" id="P79374"/>
<dbReference type="GeneID" id="118858032"/>
<dbReference type="OrthoDB" id="9940698at2759"/>
<dbReference type="GO" id="GO:0009986">
    <property type="term" value="C:cell surface"/>
    <property type="evidence" value="ECO:0007669"/>
    <property type="project" value="TreeGrafter"/>
</dbReference>
<dbReference type="GO" id="GO:0005615">
    <property type="term" value="C:extracellular space"/>
    <property type="evidence" value="ECO:0007669"/>
    <property type="project" value="UniProtKB-KW"/>
</dbReference>
<dbReference type="GO" id="GO:0005886">
    <property type="term" value="C:plasma membrane"/>
    <property type="evidence" value="ECO:0007669"/>
    <property type="project" value="UniProtKB-SubCell"/>
</dbReference>
<dbReference type="GO" id="GO:0005125">
    <property type="term" value="F:cytokine activity"/>
    <property type="evidence" value="ECO:0007669"/>
    <property type="project" value="UniProtKB-KW"/>
</dbReference>
<dbReference type="GO" id="GO:0005164">
    <property type="term" value="F:tumor necrosis factor receptor binding"/>
    <property type="evidence" value="ECO:0007669"/>
    <property type="project" value="InterPro"/>
</dbReference>
<dbReference type="GO" id="GO:0008625">
    <property type="term" value="P:extrinsic apoptotic signaling pathway via death domain receptors"/>
    <property type="evidence" value="ECO:0007669"/>
    <property type="project" value="TreeGrafter"/>
</dbReference>
<dbReference type="GO" id="GO:0006955">
    <property type="term" value="P:immune response"/>
    <property type="evidence" value="ECO:0007669"/>
    <property type="project" value="InterPro"/>
</dbReference>
<dbReference type="GO" id="GO:0043123">
    <property type="term" value="P:positive regulation of canonical NF-kappaB signal transduction"/>
    <property type="evidence" value="ECO:0007669"/>
    <property type="project" value="TreeGrafter"/>
</dbReference>
<dbReference type="GO" id="GO:2001238">
    <property type="term" value="P:positive regulation of extrinsic apoptotic signaling pathway"/>
    <property type="evidence" value="ECO:0007669"/>
    <property type="project" value="TreeGrafter"/>
</dbReference>
<dbReference type="GO" id="GO:0051092">
    <property type="term" value="P:positive regulation of NF-kappaB transcription factor activity"/>
    <property type="evidence" value="ECO:0000250"/>
    <property type="project" value="UniProtKB"/>
</dbReference>
<dbReference type="GO" id="GO:0045944">
    <property type="term" value="P:positive regulation of transcription by RNA polymerase II"/>
    <property type="evidence" value="ECO:0007669"/>
    <property type="project" value="TreeGrafter"/>
</dbReference>
<dbReference type="GO" id="GO:0065008">
    <property type="term" value="P:regulation of biological quality"/>
    <property type="evidence" value="ECO:0007669"/>
    <property type="project" value="UniProtKB-ARBA"/>
</dbReference>
<dbReference type="GO" id="GO:0050793">
    <property type="term" value="P:regulation of developmental process"/>
    <property type="evidence" value="ECO:0007669"/>
    <property type="project" value="UniProtKB-ARBA"/>
</dbReference>
<dbReference type="GO" id="GO:0051239">
    <property type="term" value="P:regulation of multicellular organismal process"/>
    <property type="evidence" value="ECO:0007669"/>
    <property type="project" value="UniProtKB-ARBA"/>
</dbReference>
<dbReference type="GO" id="GO:0051046">
    <property type="term" value="P:regulation of secretion"/>
    <property type="evidence" value="ECO:0007669"/>
    <property type="project" value="UniProtKB-ARBA"/>
</dbReference>
<dbReference type="GO" id="GO:0033209">
    <property type="term" value="P:tumor necrosis factor-mediated signaling pathway"/>
    <property type="evidence" value="ECO:0007669"/>
    <property type="project" value="TreeGrafter"/>
</dbReference>
<dbReference type="GO" id="GO:0010573">
    <property type="term" value="P:vascular endothelial growth factor production"/>
    <property type="evidence" value="ECO:0000250"/>
    <property type="project" value="UniProtKB"/>
</dbReference>
<dbReference type="CDD" id="cd00184">
    <property type="entry name" value="TNF"/>
    <property type="match status" value="1"/>
</dbReference>
<dbReference type="Gene3D" id="2.60.120.40">
    <property type="match status" value="1"/>
</dbReference>
<dbReference type="InterPro" id="IPR006053">
    <property type="entry name" value="TNF"/>
</dbReference>
<dbReference type="InterPro" id="IPR002959">
    <property type="entry name" value="TNF_alpha"/>
</dbReference>
<dbReference type="InterPro" id="IPR021184">
    <property type="entry name" value="TNF_CS"/>
</dbReference>
<dbReference type="InterPro" id="IPR006052">
    <property type="entry name" value="TNF_dom"/>
</dbReference>
<dbReference type="InterPro" id="IPR008983">
    <property type="entry name" value="Tumour_necrosis_fac-like_dom"/>
</dbReference>
<dbReference type="PANTHER" id="PTHR11471:SF23">
    <property type="entry name" value="TUMOR NECROSIS FACTOR"/>
    <property type="match status" value="1"/>
</dbReference>
<dbReference type="PANTHER" id="PTHR11471">
    <property type="entry name" value="TUMOR NECROSIS FACTOR FAMILY MEMBER"/>
    <property type="match status" value="1"/>
</dbReference>
<dbReference type="Pfam" id="PF00229">
    <property type="entry name" value="TNF"/>
    <property type="match status" value="1"/>
</dbReference>
<dbReference type="PRINTS" id="PR01234">
    <property type="entry name" value="TNECROSISFCT"/>
</dbReference>
<dbReference type="PRINTS" id="PR01235">
    <property type="entry name" value="TNFALPHA"/>
</dbReference>
<dbReference type="SMART" id="SM00207">
    <property type="entry name" value="TNF"/>
    <property type="match status" value="1"/>
</dbReference>
<dbReference type="SUPFAM" id="SSF49842">
    <property type="entry name" value="TNF-like"/>
    <property type="match status" value="1"/>
</dbReference>
<dbReference type="PROSITE" id="PS00251">
    <property type="entry name" value="THD_1"/>
    <property type="match status" value="1"/>
</dbReference>
<dbReference type="PROSITE" id="PS50049">
    <property type="entry name" value="THD_2"/>
    <property type="match status" value="1"/>
</dbReference>